<keyword id="KW-0997">Cell inner membrane</keyword>
<keyword id="KW-1003">Cell membrane</keyword>
<keyword id="KW-0472">Membrane</keyword>
<keyword id="KW-0598">Phosphotransferase system</keyword>
<keyword id="KW-1185">Reference proteome</keyword>
<keyword id="KW-0762">Sugar transport</keyword>
<keyword id="KW-0812">Transmembrane</keyword>
<keyword id="KW-1133">Transmembrane helix</keyword>
<keyword id="KW-0813">Transport</keyword>
<accession>Q8FAJ3</accession>
<comment type="function">
    <text evidence="1">The phosphoenolpyruvate-dependent sugar phosphotransferase system (sugar PTS), a major carbohydrate active transport system, catalyzes the phosphorylation of incoming sugar substrates concomitantly with their translocation across the cell membrane. The enzyme II UlaABC PTS system is involved in ascorbate transport.</text>
</comment>
<comment type="subunit">
    <text evidence="1">Homodimer.</text>
</comment>
<comment type="subcellular location">
    <subcellularLocation>
        <location evidence="1">Cell inner membrane</location>
        <topology evidence="1">Multi-pass membrane protein</topology>
    </subcellularLocation>
</comment>
<comment type="induction">
    <text evidence="1">Induced by L-ascorbate. Repressed by UlaR.</text>
</comment>
<comment type="domain">
    <text evidence="1">In classical PTS systems, the PTS EIIC type-2 domain forms the translocation channel and contains the specific substrate-binding site. UlaA does not exhibit the topological features of any recognized enzyme IIC.</text>
</comment>
<comment type="similarity">
    <text evidence="2">Belongs to the UlaA family.</text>
</comment>
<sequence>MEILYNIFTVFFNQVMTNAPLLLGIVTCLGYILLRKSVSVIIKGTIKTIIGFMLLQAGSGILTSTFKPVVAKMSEVYGINGAISDTYASMMATIERMGDAYSWVGYAVLLALALNICYVLLRRITGIRTIMLTGHIMFQQAGLIAVTLFIFGYSMWTTIICTAILVSLYWGITSNMMYKPTQEVTDGCGFSIGHQQQFASWIAYKVAPFLGKKEESVEDLKLPGWLNIFHDNIVSTAIVMTIFFGAILLSFGIDTVQAMAGKVNWTVYILQTGFSFAVAIFIITQGVRMFVAELSEAFNGISQRLIPGAVLAIDCAAIYSFAPNAVVWGFMWGTIGQLIAVGILVACGSSILIIPGFIPMFFSNATIGVFANHFGGWRAALKICLVMGMIEIFGCVWAVKLTGMSAWMGMADWSILAPPMMQGFFSIGIAFMAVIIVIALAYMFFAGRALRAEEDAEKQLAEQSA</sequence>
<name>ULAA_ECOL6</name>
<evidence type="ECO:0000250" key="1">
    <source>
        <dbReference type="UniProtKB" id="P39301"/>
    </source>
</evidence>
<evidence type="ECO:0000305" key="2"/>
<protein>
    <recommendedName>
        <fullName evidence="1">Ascorbate-specific PTS system EIIC component</fullName>
    </recommendedName>
    <alternativeName>
        <fullName evidence="1">Ascorbate-specific permease IIC component UlaA</fullName>
    </alternativeName>
</protein>
<feature type="chain" id="PRO_0000230656" description="Ascorbate-specific PTS system EIIC component">
    <location>
        <begin position="1"/>
        <end position="465"/>
    </location>
</feature>
<feature type="transmembrane region" description="Helical" evidence="1">
    <location>
        <begin position="14"/>
        <end position="34"/>
    </location>
</feature>
<feature type="transmembrane region" description="Helical" evidence="1">
    <location>
        <begin position="38"/>
        <end position="58"/>
    </location>
</feature>
<feature type="transmembrane region" description="Helical" evidence="1">
    <location>
        <begin position="101"/>
        <end position="121"/>
    </location>
</feature>
<feature type="transmembrane region" description="Helical" evidence="1">
    <location>
        <begin position="141"/>
        <end position="161"/>
    </location>
</feature>
<feature type="transmembrane region" description="Helical" evidence="1">
    <location>
        <begin position="233"/>
        <end position="253"/>
    </location>
</feature>
<feature type="transmembrane region" description="Helical" evidence="1">
    <location>
        <begin position="263"/>
        <end position="283"/>
    </location>
</feature>
<feature type="transmembrane region" description="Helical" evidence="1">
    <location>
        <begin position="316"/>
        <end position="336"/>
    </location>
</feature>
<feature type="transmembrane region" description="Helical" evidence="1">
    <location>
        <begin position="338"/>
        <end position="358"/>
    </location>
</feature>
<feature type="transmembrane region" description="Helical" evidence="1">
    <location>
        <begin position="379"/>
        <end position="399"/>
    </location>
</feature>
<feature type="transmembrane region" description="Helical" evidence="1">
    <location>
        <begin position="427"/>
        <end position="447"/>
    </location>
</feature>
<feature type="binding site" evidence="1">
    <location>
        <begin position="86"/>
        <end position="87"/>
    </location>
    <ligand>
        <name>L-ascorbate</name>
        <dbReference type="ChEBI" id="CHEBI:38290"/>
    </ligand>
</feature>
<feature type="binding site" evidence="1">
    <location>
        <begin position="135"/>
        <end position="139"/>
    </location>
    <ligand>
        <name>L-ascorbate</name>
        <dbReference type="ChEBI" id="CHEBI:38290"/>
    </ligand>
</feature>
<feature type="binding site" evidence="1">
    <location>
        <begin position="194"/>
        <end position="195"/>
    </location>
    <ligand>
        <name>L-ascorbate</name>
        <dbReference type="ChEBI" id="CHEBI:38290"/>
    </ligand>
</feature>
<feature type="binding site" evidence="1">
    <location>
        <position position="314"/>
    </location>
    <ligand>
        <name>L-ascorbate</name>
        <dbReference type="ChEBI" id="CHEBI:38290"/>
    </ligand>
</feature>
<dbReference type="EMBL" id="AE014075">
    <property type="protein sequence ID" value="AAN83702.1"/>
    <property type="molecule type" value="Genomic_DNA"/>
</dbReference>
<dbReference type="RefSeq" id="WP_000404886.1">
    <property type="nucleotide sequence ID" value="NZ_CP051263.1"/>
</dbReference>
<dbReference type="SMR" id="Q8FAJ3"/>
<dbReference type="STRING" id="199310.c5281"/>
<dbReference type="KEGG" id="ecc:c5281"/>
<dbReference type="eggNOG" id="COG3037">
    <property type="taxonomic scope" value="Bacteria"/>
</dbReference>
<dbReference type="HOGENOM" id="CLU_031784_1_0_6"/>
<dbReference type="BioCyc" id="ECOL199310:C5281-MONOMER"/>
<dbReference type="Proteomes" id="UP000001410">
    <property type="component" value="Chromosome"/>
</dbReference>
<dbReference type="GO" id="GO:0005886">
    <property type="term" value="C:plasma membrane"/>
    <property type="evidence" value="ECO:0007669"/>
    <property type="project" value="UniProtKB-SubCell"/>
</dbReference>
<dbReference type="GO" id="GO:0009401">
    <property type="term" value="P:phosphoenolpyruvate-dependent sugar phosphotransferase system"/>
    <property type="evidence" value="ECO:0007669"/>
    <property type="project" value="UniProtKB-KW"/>
</dbReference>
<dbReference type="InterPro" id="IPR051562">
    <property type="entry name" value="Ascorbate-PTS_EIIC"/>
</dbReference>
<dbReference type="InterPro" id="IPR004703">
    <property type="entry name" value="PTS_sugar-sp_permease"/>
</dbReference>
<dbReference type="NCBIfam" id="NF006919">
    <property type="entry name" value="PRK09410.1-1"/>
    <property type="match status" value="1"/>
</dbReference>
<dbReference type="PANTHER" id="PTHR33843">
    <property type="entry name" value="ASCORBATE-SPECIFIC PTS SYSTEM EIIC COMPONENT"/>
    <property type="match status" value="1"/>
</dbReference>
<dbReference type="PANTHER" id="PTHR33843:SF4">
    <property type="entry name" value="ASCORBATE-SPECIFIC PTS SYSTEM EIIC COMPONENT"/>
    <property type="match status" value="1"/>
</dbReference>
<dbReference type="Pfam" id="PF03611">
    <property type="entry name" value="EIIC-GAT"/>
    <property type="match status" value="1"/>
</dbReference>
<proteinExistence type="inferred from homology"/>
<reference key="1">
    <citation type="journal article" date="2002" name="Proc. Natl. Acad. Sci. U.S.A.">
        <title>Extensive mosaic structure revealed by the complete genome sequence of uropathogenic Escherichia coli.</title>
        <authorList>
            <person name="Welch R.A."/>
            <person name="Burland V."/>
            <person name="Plunkett G. III"/>
            <person name="Redford P."/>
            <person name="Roesch P."/>
            <person name="Rasko D."/>
            <person name="Buckles E.L."/>
            <person name="Liou S.-R."/>
            <person name="Boutin A."/>
            <person name="Hackett J."/>
            <person name="Stroud D."/>
            <person name="Mayhew G.F."/>
            <person name="Rose D.J."/>
            <person name="Zhou S."/>
            <person name="Schwartz D.C."/>
            <person name="Perna N.T."/>
            <person name="Mobley H.L.T."/>
            <person name="Donnenberg M.S."/>
            <person name="Blattner F.R."/>
        </authorList>
    </citation>
    <scope>NUCLEOTIDE SEQUENCE [LARGE SCALE GENOMIC DNA]</scope>
    <source>
        <strain>CFT073 / ATCC 700928 / UPEC</strain>
    </source>
</reference>
<gene>
    <name type="primary">ulaA</name>
    <name type="ordered locus">c5281</name>
</gene>
<organism>
    <name type="scientific">Escherichia coli O6:H1 (strain CFT073 / ATCC 700928 / UPEC)</name>
    <dbReference type="NCBI Taxonomy" id="199310"/>
    <lineage>
        <taxon>Bacteria</taxon>
        <taxon>Pseudomonadati</taxon>
        <taxon>Pseudomonadota</taxon>
        <taxon>Gammaproteobacteria</taxon>
        <taxon>Enterobacterales</taxon>
        <taxon>Enterobacteriaceae</taxon>
        <taxon>Escherichia</taxon>
    </lineage>
</organism>